<dbReference type="EMBL" id="U00090">
    <property type="protein sequence ID" value="AAB91949.1"/>
    <property type="molecule type" value="Genomic_DNA"/>
</dbReference>
<dbReference type="RefSeq" id="NP_444162.1">
    <property type="nucleotide sequence ID" value="NC_000914.2"/>
</dbReference>
<dbReference type="RefSeq" id="WP_010875104.1">
    <property type="nucleotide sequence ID" value="NC_000914.2"/>
</dbReference>
<dbReference type="SMR" id="P55718"/>
<dbReference type="KEGG" id="rhi:NGR_a00630"/>
<dbReference type="PATRIC" id="fig|394.7.peg.59"/>
<dbReference type="eggNOG" id="ENOG5030RZG">
    <property type="taxonomic scope" value="Bacteria"/>
</dbReference>
<dbReference type="HOGENOM" id="CLU_129854_0_0_5"/>
<dbReference type="OrthoDB" id="9807337at2"/>
<dbReference type="Proteomes" id="UP000001054">
    <property type="component" value="Plasmid pNGR234a"/>
</dbReference>
<protein>
    <recommendedName>
        <fullName>Uncharacterized protein y4yJ</fullName>
    </recommendedName>
</protein>
<proteinExistence type="predicted"/>
<name>Y4YJ_SINFN</name>
<sequence length="178" mass="20425">MDVAFDLVNYAYASRLRLLKEMQERDARRKLSKKEAQHHMAIVAAQNASRELEIAQQQRAGKEAQLYQELTSLNTLSSAALDHHHLHIERLAAEITIRGQVLDDARIAQEQAETAASETKALWVKRSEARHKWQQIQDDLRRAVDILSEAAGEIEADDEILLRYGRGSLDQRSRNEFR</sequence>
<organism>
    <name type="scientific">Sinorhizobium fredii (strain NBRC 101917 / NGR234)</name>
    <dbReference type="NCBI Taxonomy" id="394"/>
    <lineage>
        <taxon>Bacteria</taxon>
        <taxon>Pseudomonadati</taxon>
        <taxon>Pseudomonadota</taxon>
        <taxon>Alphaproteobacteria</taxon>
        <taxon>Hyphomicrobiales</taxon>
        <taxon>Rhizobiaceae</taxon>
        <taxon>Sinorhizobium/Ensifer group</taxon>
        <taxon>Sinorhizobium</taxon>
    </lineage>
</organism>
<feature type="chain" id="PRO_0000200972" description="Uncharacterized protein y4yJ">
    <location>
        <begin position="1"/>
        <end position="178"/>
    </location>
</feature>
<geneLocation type="plasmid">
    <name>sym pNGR234a</name>
</geneLocation>
<reference key="1">
    <citation type="journal article" date="1997" name="Nature">
        <title>Molecular basis of symbiosis between Rhizobium and legumes.</title>
        <authorList>
            <person name="Freiberg C.A."/>
            <person name="Fellay R."/>
            <person name="Bairoch A."/>
            <person name="Broughton W.J."/>
            <person name="Rosenthal A."/>
            <person name="Perret X."/>
        </authorList>
    </citation>
    <scope>NUCLEOTIDE SEQUENCE [LARGE SCALE GENOMIC DNA]</scope>
    <source>
        <strain>NBRC 101917 / NGR234</strain>
    </source>
</reference>
<reference key="2">
    <citation type="journal article" date="2009" name="Appl. Environ. Microbiol.">
        <title>Rhizobium sp. strain NGR234 possesses a remarkable number of secretion systems.</title>
        <authorList>
            <person name="Schmeisser C."/>
            <person name="Liesegang H."/>
            <person name="Krysciak D."/>
            <person name="Bakkou N."/>
            <person name="Le Quere A."/>
            <person name="Wollherr A."/>
            <person name="Heinemeyer I."/>
            <person name="Morgenstern B."/>
            <person name="Pommerening-Roeser A."/>
            <person name="Flores M."/>
            <person name="Palacios R."/>
            <person name="Brenner S."/>
            <person name="Gottschalk G."/>
            <person name="Schmitz R.A."/>
            <person name="Broughton W.J."/>
            <person name="Perret X."/>
            <person name="Strittmatter A.W."/>
            <person name="Streit W.R."/>
        </authorList>
    </citation>
    <scope>NUCLEOTIDE SEQUENCE [LARGE SCALE GENOMIC DNA]</scope>
    <source>
        <strain>NBRC 101917 / NGR234</strain>
    </source>
</reference>
<accession>P55718</accession>
<keyword id="KW-0614">Plasmid</keyword>
<keyword id="KW-1185">Reference proteome</keyword>
<gene>
    <name type="ordered locus">NGR_a00630</name>
    <name type="ORF">y4yJ</name>
</gene>